<keyword id="KW-0021">Allosteric enzyme</keyword>
<keyword id="KW-0328">Glycosyltransferase</keyword>
<keyword id="KW-0342">GTP-binding</keyword>
<keyword id="KW-0460">Magnesium</keyword>
<keyword id="KW-0547">Nucleotide-binding</keyword>
<keyword id="KW-0808">Transferase</keyword>
<sequence>MSKVHVFDHPLIQHKLSYIRDVNTGTKEFRELVDEVGMLMAYEVTRDLELQDVDIETPVTKMTAKRLAGKKLAIVPILRAGLGMTDGILSLVPAARVGHIGLYRDPETLKAVEYFAKLPQDITERQIIVVDPMLATGASAIEAITSLKKRGAKNIRFMCLIAAPEGVEKMHEAHPDVDIYIAALDEKLNDKAYITPGLGDAGDRLFGTK</sequence>
<evidence type="ECO:0000255" key="1">
    <source>
        <dbReference type="HAMAP-Rule" id="MF_01218"/>
    </source>
</evidence>
<name>UPP_STAAT</name>
<gene>
    <name evidence="1" type="primary">upp</name>
    <name type="ordered locus">USA300HOU_2102</name>
</gene>
<protein>
    <recommendedName>
        <fullName evidence="1">Uracil phosphoribosyltransferase</fullName>
        <ecNumber evidence="1">2.4.2.9</ecNumber>
    </recommendedName>
    <alternativeName>
        <fullName evidence="1">UMP pyrophosphorylase</fullName>
    </alternativeName>
    <alternativeName>
        <fullName evidence="1">UPRTase</fullName>
    </alternativeName>
</protein>
<dbReference type="EC" id="2.4.2.9" evidence="1"/>
<dbReference type="EMBL" id="CP000730">
    <property type="protein sequence ID" value="ABX30099.1"/>
    <property type="molecule type" value="Genomic_DNA"/>
</dbReference>
<dbReference type="RefSeq" id="WP_000048712.1">
    <property type="nucleotide sequence ID" value="NC_010079.1"/>
</dbReference>
<dbReference type="SMR" id="A8YY79"/>
<dbReference type="KEGG" id="sax:USA300HOU_2102"/>
<dbReference type="HOGENOM" id="CLU_067096_2_2_9"/>
<dbReference type="UniPathway" id="UPA00574">
    <property type="reaction ID" value="UER00636"/>
</dbReference>
<dbReference type="GO" id="GO:0005525">
    <property type="term" value="F:GTP binding"/>
    <property type="evidence" value="ECO:0007669"/>
    <property type="project" value="UniProtKB-KW"/>
</dbReference>
<dbReference type="GO" id="GO:0000287">
    <property type="term" value="F:magnesium ion binding"/>
    <property type="evidence" value="ECO:0007669"/>
    <property type="project" value="UniProtKB-UniRule"/>
</dbReference>
<dbReference type="GO" id="GO:0004845">
    <property type="term" value="F:uracil phosphoribosyltransferase activity"/>
    <property type="evidence" value="ECO:0007669"/>
    <property type="project" value="UniProtKB-UniRule"/>
</dbReference>
<dbReference type="GO" id="GO:0044206">
    <property type="term" value="P:UMP salvage"/>
    <property type="evidence" value="ECO:0007669"/>
    <property type="project" value="UniProtKB-UniRule"/>
</dbReference>
<dbReference type="GO" id="GO:0006223">
    <property type="term" value="P:uracil salvage"/>
    <property type="evidence" value="ECO:0007669"/>
    <property type="project" value="InterPro"/>
</dbReference>
<dbReference type="CDD" id="cd06223">
    <property type="entry name" value="PRTases_typeI"/>
    <property type="match status" value="1"/>
</dbReference>
<dbReference type="FunFam" id="3.40.50.2020:FF:000003">
    <property type="entry name" value="Uracil phosphoribosyltransferase"/>
    <property type="match status" value="1"/>
</dbReference>
<dbReference type="Gene3D" id="3.40.50.2020">
    <property type="match status" value="1"/>
</dbReference>
<dbReference type="HAMAP" id="MF_01218_B">
    <property type="entry name" value="Upp_B"/>
    <property type="match status" value="1"/>
</dbReference>
<dbReference type="InterPro" id="IPR000836">
    <property type="entry name" value="PRibTrfase_dom"/>
</dbReference>
<dbReference type="InterPro" id="IPR029057">
    <property type="entry name" value="PRTase-like"/>
</dbReference>
<dbReference type="InterPro" id="IPR034332">
    <property type="entry name" value="Upp_B"/>
</dbReference>
<dbReference type="InterPro" id="IPR050054">
    <property type="entry name" value="UPRTase/APRTase"/>
</dbReference>
<dbReference type="InterPro" id="IPR005765">
    <property type="entry name" value="Ura_phspho_trans"/>
</dbReference>
<dbReference type="NCBIfam" id="NF001097">
    <property type="entry name" value="PRK00129.1"/>
    <property type="match status" value="1"/>
</dbReference>
<dbReference type="NCBIfam" id="TIGR01091">
    <property type="entry name" value="upp"/>
    <property type="match status" value="1"/>
</dbReference>
<dbReference type="PANTHER" id="PTHR32315">
    <property type="entry name" value="ADENINE PHOSPHORIBOSYLTRANSFERASE"/>
    <property type="match status" value="1"/>
</dbReference>
<dbReference type="PANTHER" id="PTHR32315:SF4">
    <property type="entry name" value="URACIL PHOSPHORIBOSYLTRANSFERASE, CHLOROPLASTIC"/>
    <property type="match status" value="1"/>
</dbReference>
<dbReference type="Pfam" id="PF14681">
    <property type="entry name" value="UPRTase"/>
    <property type="match status" value="1"/>
</dbReference>
<dbReference type="SUPFAM" id="SSF53271">
    <property type="entry name" value="PRTase-like"/>
    <property type="match status" value="1"/>
</dbReference>
<comment type="function">
    <text evidence="1">Catalyzes the conversion of uracil and 5-phospho-alpha-D-ribose 1-diphosphate (PRPP) to UMP and diphosphate.</text>
</comment>
<comment type="catalytic activity">
    <reaction evidence="1">
        <text>UMP + diphosphate = 5-phospho-alpha-D-ribose 1-diphosphate + uracil</text>
        <dbReference type="Rhea" id="RHEA:13017"/>
        <dbReference type="ChEBI" id="CHEBI:17568"/>
        <dbReference type="ChEBI" id="CHEBI:33019"/>
        <dbReference type="ChEBI" id="CHEBI:57865"/>
        <dbReference type="ChEBI" id="CHEBI:58017"/>
        <dbReference type="EC" id="2.4.2.9"/>
    </reaction>
</comment>
<comment type="cofactor">
    <cofactor evidence="1">
        <name>Mg(2+)</name>
        <dbReference type="ChEBI" id="CHEBI:18420"/>
    </cofactor>
    <text evidence="1">Binds 1 Mg(2+) ion per subunit. The magnesium is bound as Mg-PRPP.</text>
</comment>
<comment type="activity regulation">
    <text evidence="1">Allosterically activated by GTP.</text>
</comment>
<comment type="pathway">
    <text evidence="1">Pyrimidine metabolism; UMP biosynthesis via salvage pathway; UMP from uracil: step 1/1.</text>
</comment>
<comment type="similarity">
    <text evidence="1">Belongs to the UPRTase family.</text>
</comment>
<reference key="1">
    <citation type="journal article" date="2007" name="BMC Microbiol.">
        <title>Subtle genetic changes enhance virulence of methicillin resistant and sensitive Staphylococcus aureus.</title>
        <authorList>
            <person name="Highlander S.K."/>
            <person name="Hulten K.G."/>
            <person name="Qin X."/>
            <person name="Jiang H."/>
            <person name="Yerrapragada S."/>
            <person name="Mason E.O. Jr."/>
            <person name="Shang Y."/>
            <person name="Williams T.M."/>
            <person name="Fortunov R.M."/>
            <person name="Liu Y."/>
            <person name="Igboeli O."/>
            <person name="Petrosino J."/>
            <person name="Tirumalai M."/>
            <person name="Uzman A."/>
            <person name="Fox G.E."/>
            <person name="Cardenas A.M."/>
            <person name="Muzny D.M."/>
            <person name="Hemphill L."/>
            <person name="Ding Y."/>
            <person name="Dugan S."/>
            <person name="Blyth P.R."/>
            <person name="Buhay C.J."/>
            <person name="Dinh H.H."/>
            <person name="Hawes A.C."/>
            <person name="Holder M."/>
            <person name="Kovar C.L."/>
            <person name="Lee S.L."/>
            <person name="Liu W."/>
            <person name="Nazareth L.V."/>
            <person name="Wang Q."/>
            <person name="Zhou J."/>
            <person name="Kaplan S.L."/>
            <person name="Weinstock G.M."/>
        </authorList>
    </citation>
    <scope>NUCLEOTIDE SEQUENCE [LARGE SCALE GENOMIC DNA]</scope>
    <source>
        <strain>USA300 / TCH1516</strain>
    </source>
</reference>
<proteinExistence type="inferred from homology"/>
<organism>
    <name type="scientific">Staphylococcus aureus (strain USA300 / TCH1516)</name>
    <dbReference type="NCBI Taxonomy" id="451516"/>
    <lineage>
        <taxon>Bacteria</taxon>
        <taxon>Bacillati</taxon>
        <taxon>Bacillota</taxon>
        <taxon>Bacilli</taxon>
        <taxon>Bacillales</taxon>
        <taxon>Staphylococcaceae</taxon>
        <taxon>Staphylococcus</taxon>
    </lineage>
</organism>
<accession>A8YY79</accession>
<feature type="chain" id="PRO_1000085644" description="Uracil phosphoribosyltransferase">
    <location>
        <begin position="1"/>
        <end position="209"/>
    </location>
</feature>
<feature type="binding site" evidence="1">
    <location>
        <position position="79"/>
    </location>
    <ligand>
        <name>5-phospho-alpha-D-ribose 1-diphosphate</name>
        <dbReference type="ChEBI" id="CHEBI:58017"/>
    </ligand>
</feature>
<feature type="binding site" evidence="1">
    <location>
        <position position="104"/>
    </location>
    <ligand>
        <name>5-phospho-alpha-D-ribose 1-diphosphate</name>
        <dbReference type="ChEBI" id="CHEBI:58017"/>
    </ligand>
</feature>
<feature type="binding site" evidence="1">
    <location>
        <begin position="131"/>
        <end position="139"/>
    </location>
    <ligand>
        <name>5-phospho-alpha-D-ribose 1-diphosphate</name>
        <dbReference type="ChEBI" id="CHEBI:58017"/>
    </ligand>
</feature>
<feature type="binding site" evidence="1">
    <location>
        <position position="194"/>
    </location>
    <ligand>
        <name>uracil</name>
        <dbReference type="ChEBI" id="CHEBI:17568"/>
    </ligand>
</feature>
<feature type="binding site" evidence="1">
    <location>
        <begin position="199"/>
        <end position="201"/>
    </location>
    <ligand>
        <name>uracil</name>
        <dbReference type="ChEBI" id="CHEBI:17568"/>
    </ligand>
</feature>
<feature type="binding site" evidence="1">
    <location>
        <position position="200"/>
    </location>
    <ligand>
        <name>5-phospho-alpha-D-ribose 1-diphosphate</name>
        <dbReference type="ChEBI" id="CHEBI:58017"/>
    </ligand>
</feature>